<proteinExistence type="evidence at protein level"/>
<comment type="tissue specificity">
    <text>Arthrodial membrane.</text>
</comment>
<comment type="mass spectrometry" mass="11582.8" method="MALDI" evidence="3"/>
<evidence type="ECO:0000255" key="1">
    <source>
        <dbReference type="PROSITE-ProRule" id="PRU00497"/>
    </source>
</evidence>
<evidence type="ECO:0000256" key="2">
    <source>
        <dbReference type="SAM" id="MobiDB-lite"/>
    </source>
</evidence>
<evidence type="ECO:0000269" key="3">
    <source>
    </source>
</evidence>
<protein>
    <recommendedName>
        <fullName>Cuticle protein AM1159</fullName>
        <shortName>CPAM1159</shortName>
    </recommendedName>
</protein>
<keyword id="KW-0193">Cuticle</keyword>
<keyword id="KW-0903">Direct protein sequencing</keyword>
<dbReference type="SMR" id="P81576"/>
<dbReference type="GO" id="GO:0062129">
    <property type="term" value="C:chitin-based extracellular matrix"/>
    <property type="evidence" value="ECO:0007669"/>
    <property type="project" value="TreeGrafter"/>
</dbReference>
<dbReference type="GO" id="GO:0008010">
    <property type="term" value="F:structural constituent of chitin-based larval cuticle"/>
    <property type="evidence" value="ECO:0007669"/>
    <property type="project" value="TreeGrafter"/>
</dbReference>
<dbReference type="InterPro" id="IPR031311">
    <property type="entry name" value="CHIT_BIND_RR_consensus"/>
</dbReference>
<dbReference type="InterPro" id="IPR050468">
    <property type="entry name" value="Cuticle_Struct_Prot"/>
</dbReference>
<dbReference type="InterPro" id="IPR000618">
    <property type="entry name" value="Insect_cuticle"/>
</dbReference>
<dbReference type="PANTHER" id="PTHR10380">
    <property type="entry name" value="CUTICLE PROTEIN"/>
    <property type="match status" value="1"/>
</dbReference>
<dbReference type="PANTHER" id="PTHR10380:SF173">
    <property type="entry name" value="CUTICULAR PROTEIN 47EF, ISOFORM C-RELATED"/>
    <property type="match status" value="1"/>
</dbReference>
<dbReference type="Pfam" id="PF00379">
    <property type="entry name" value="Chitin_bind_4"/>
    <property type="match status" value="1"/>
</dbReference>
<dbReference type="PRINTS" id="PR00947">
    <property type="entry name" value="CUTICLE"/>
</dbReference>
<dbReference type="PROSITE" id="PS00233">
    <property type="entry name" value="CHIT_BIND_RR_1"/>
    <property type="match status" value="1"/>
</dbReference>
<dbReference type="PROSITE" id="PS51155">
    <property type="entry name" value="CHIT_BIND_RR_2"/>
    <property type="match status" value="1"/>
</dbReference>
<sequence length="105" mass="11586">ENTATVVVDERTDNGDGNFNYNFQTSNGIEDTKTGTPGSQGQSNMQGTFRFLLPDGTTAEVRYVADEFGYRPESPLLPVGPELPPHVHELLRIAEEQRAQGITFE</sequence>
<organism>
    <name type="scientific">Cancer pagurus</name>
    <name type="common">Rock crab</name>
    <dbReference type="NCBI Taxonomy" id="6755"/>
    <lineage>
        <taxon>Eukaryota</taxon>
        <taxon>Metazoa</taxon>
        <taxon>Ecdysozoa</taxon>
        <taxon>Arthropoda</taxon>
        <taxon>Crustacea</taxon>
        <taxon>Multicrustacea</taxon>
        <taxon>Malacostraca</taxon>
        <taxon>Eumalacostraca</taxon>
        <taxon>Eucarida</taxon>
        <taxon>Decapoda</taxon>
        <taxon>Pleocyemata</taxon>
        <taxon>Brachyura</taxon>
        <taxon>Eubrachyura</taxon>
        <taxon>Cancroidea</taxon>
        <taxon>Cancridae</taxon>
        <taxon>Cancer</taxon>
    </lineage>
</organism>
<feature type="chain" id="PRO_0000196157" description="Cuticle protein AM1159">
    <location>
        <begin position="1"/>
        <end position="105"/>
    </location>
</feature>
<feature type="domain" description="Chitin-binding type R&amp;R" evidence="1">
    <location>
        <begin position="16"/>
        <end position="81"/>
    </location>
</feature>
<feature type="region of interest" description="Disordered" evidence="2">
    <location>
        <begin position="25"/>
        <end position="46"/>
    </location>
</feature>
<accession>P81576</accession>
<name>CUPA2_CANPG</name>
<reference key="1">
    <citation type="journal article" date="1999" name="Comp. Biochem. Physiol.">
        <title>Exoskeletal proteins from the crab, Cancer pagurus.</title>
        <authorList>
            <person name="Andersen S.O."/>
        </authorList>
    </citation>
    <scope>PROTEIN SEQUENCE</scope>
    <scope>MASS SPECTROMETRY</scope>
    <source>
        <tissue>Carapace cuticle</tissue>
    </source>
</reference>